<accession>A0QL11</accession>
<proteinExistence type="inferred from homology"/>
<feature type="chain" id="PRO_1000054652" description="Large ribosomal subunit protein uL16">
    <location>
        <begin position="1"/>
        <end position="138"/>
    </location>
</feature>
<feature type="region of interest" description="Disordered" evidence="2">
    <location>
        <begin position="1"/>
        <end position="22"/>
    </location>
</feature>
<feature type="compositionally biased region" description="Basic residues" evidence="2">
    <location>
        <begin position="1"/>
        <end position="17"/>
    </location>
</feature>
<organism>
    <name type="scientific">Mycobacterium avium (strain 104)</name>
    <dbReference type="NCBI Taxonomy" id="243243"/>
    <lineage>
        <taxon>Bacteria</taxon>
        <taxon>Bacillati</taxon>
        <taxon>Actinomycetota</taxon>
        <taxon>Actinomycetes</taxon>
        <taxon>Mycobacteriales</taxon>
        <taxon>Mycobacteriaceae</taxon>
        <taxon>Mycobacterium</taxon>
        <taxon>Mycobacterium avium complex (MAC)</taxon>
    </lineage>
</organism>
<reference key="1">
    <citation type="submission" date="2006-10" db="EMBL/GenBank/DDBJ databases">
        <authorList>
            <person name="Fleischmann R.D."/>
            <person name="Dodson R.J."/>
            <person name="Haft D.H."/>
            <person name="Merkel J.S."/>
            <person name="Nelson W.C."/>
            <person name="Fraser C.M."/>
        </authorList>
    </citation>
    <scope>NUCLEOTIDE SEQUENCE [LARGE SCALE GENOMIC DNA]</scope>
    <source>
        <strain>104</strain>
    </source>
</reference>
<protein>
    <recommendedName>
        <fullName evidence="1">Large ribosomal subunit protein uL16</fullName>
    </recommendedName>
    <alternativeName>
        <fullName evidence="3">50S ribosomal protein L16</fullName>
    </alternativeName>
</protein>
<dbReference type="EMBL" id="CP000479">
    <property type="protein sequence ID" value="ABK65356.1"/>
    <property type="molecule type" value="Genomic_DNA"/>
</dbReference>
<dbReference type="RefSeq" id="WP_003873511.1">
    <property type="nucleotide sequence ID" value="NC_008595.1"/>
</dbReference>
<dbReference type="SMR" id="A0QL11"/>
<dbReference type="GeneID" id="75271978"/>
<dbReference type="KEGG" id="mav:MAV_4464"/>
<dbReference type="HOGENOM" id="CLU_078858_2_1_11"/>
<dbReference type="Proteomes" id="UP000001574">
    <property type="component" value="Chromosome"/>
</dbReference>
<dbReference type="GO" id="GO:0022625">
    <property type="term" value="C:cytosolic large ribosomal subunit"/>
    <property type="evidence" value="ECO:0007669"/>
    <property type="project" value="TreeGrafter"/>
</dbReference>
<dbReference type="GO" id="GO:0019843">
    <property type="term" value="F:rRNA binding"/>
    <property type="evidence" value="ECO:0007669"/>
    <property type="project" value="UniProtKB-UniRule"/>
</dbReference>
<dbReference type="GO" id="GO:0003735">
    <property type="term" value="F:structural constituent of ribosome"/>
    <property type="evidence" value="ECO:0007669"/>
    <property type="project" value="InterPro"/>
</dbReference>
<dbReference type="GO" id="GO:0000049">
    <property type="term" value="F:tRNA binding"/>
    <property type="evidence" value="ECO:0007669"/>
    <property type="project" value="UniProtKB-KW"/>
</dbReference>
<dbReference type="GO" id="GO:0006412">
    <property type="term" value="P:translation"/>
    <property type="evidence" value="ECO:0007669"/>
    <property type="project" value="UniProtKB-UniRule"/>
</dbReference>
<dbReference type="CDD" id="cd01433">
    <property type="entry name" value="Ribosomal_L16_L10e"/>
    <property type="match status" value="1"/>
</dbReference>
<dbReference type="FunFam" id="3.90.1170.10:FF:000001">
    <property type="entry name" value="50S ribosomal protein L16"/>
    <property type="match status" value="1"/>
</dbReference>
<dbReference type="Gene3D" id="3.90.1170.10">
    <property type="entry name" value="Ribosomal protein L10e/L16"/>
    <property type="match status" value="1"/>
</dbReference>
<dbReference type="HAMAP" id="MF_01342">
    <property type="entry name" value="Ribosomal_uL16"/>
    <property type="match status" value="1"/>
</dbReference>
<dbReference type="InterPro" id="IPR047873">
    <property type="entry name" value="Ribosomal_uL16"/>
</dbReference>
<dbReference type="InterPro" id="IPR000114">
    <property type="entry name" value="Ribosomal_uL16_bact-type"/>
</dbReference>
<dbReference type="InterPro" id="IPR020798">
    <property type="entry name" value="Ribosomal_uL16_CS"/>
</dbReference>
<dbReference type="InterPro" id="IPR016180">
    <property type="entry name" value="Ribosomal_uL16_dom"/>
</dbReference>
<dbReference type="InterPro" id="IPR036920">
    <property type="entry name" value="Ribosomal_uL16_sf"/>
</dbReference>
<dbReference type="NCBIfam" id="TIGR01164">
    <property type="entry name" value="rplP_bact"/>
    <property type="match status" value="1"/>
</dbReference>
<dbReference type="PANTHER" id="PTHR12220">
    <property type="entry name" value="50S/60S RIBOSOMAL PROTEIN L16"/>
    <property type="match status" value="1"/>
</dbReference>
<dbReference type="PANTHER" id="PTHR12220:SF13">
    <property type="entry name" value="LARGE RIBOSOMAL SUBUNIT PROTEIN UL16M"/>
    <property type="match status" value="1"/>
</dbReference>
<dbReference type="Pfam" id="PF00252">
    <property type="entry name" value="Ribosomal_L16"/>
    <property type="match status" value="1"/>
</dbReference>
<dbReference type="PRINTS" id="PR00060">
    <property type="entry name" value="RIBOSOMALL16"/>
</dbReference>
<dbReference type="SUPFAM" id="SSF54686">
    <property type="entry name" value="Ribosomal protein L16p/L10e"/>
    <property type="match status" value="1"/>
</dbReference>
<dbReference type="PROSITE" id="PS00586">
    <property type="entry name" value="RIBOSOMAL_L16_1"/>
    <property type="match status" value="1"/>
</dbReference>
<dbReference type="PROSITE" id="PS00701">
    <property type="entry name" value="RIBOSOMAL_L16_2"/>
    <property type="match status" value="1"/>
</dbReference>
<gene>
    <name evidence="1" type="primary">rplP</name>
    <name type="ordered locus">MAV_4464</name>
</gene>
<evidence type="ECO:0000255" key="1">
    <source>
        <dbReference type="HAMAP-Rule" id="MF_01342"/>
    </source>
</evidence>
<evidence type="ECO:0000256" key="2">
    <source>
        <dbReference type="SAM" id="MobiDB-lite"/>
    </source>
</evidence>
<evidence type="ECO:0000305" key="3"/>
<name>RL16_MYCA1</name>
<keyword id="KW-0687">Ribonucleoprotein</keyword>
<keyword id="KW-0689">Ribosomal protein</keyword>
<keyword id="KW-0694">RNA-binding</keyword>
<keyword id="KW-0699">rRNA-binding</keyword>
<keyword id="KW-0820">tRNA-binding</keyword>
<sequence length="138" mass="15721">MLIPRKVKHRKQHHPRQRGIASGGTAVNFGDYGIQALEHAYVTNRQIESARIAINRHIKRGGKVWINVFPDRPLTKKPAETRMGSGKGSPEWWVVNVKPGRVLFELSYPNEQTARAALTRAIHKLPIKARIVTREDQF</sequence>
<comment type="function">
    <text evidence="1">Binds 23S rRNA and is also seen to make contacts with the A and possibly P site tRNAs.</text>
</comment>
<comment type="subunit">
    <text evidence="1">Part of the 50S ribosomal subunit.</text>
</comment>
<comment type="similarity">
    <text evidence="1">Belongs to the universal ribosomal protein uL16 family.</text>
</comment>